<dbReference type="EC" id="2.7.7.105" evidence="1"/>
<dbReference type="EMBL" id="CP000611">
    <property type="protein sequence ID" value="ABQ74794.1"/>
    <property type="molecule type" value="Genomic_DNA"/>
</dbReference>
<dbReference type="SMR" id="A5U6Z4"/>
<dbReference type="KEGG" id="mra:MRA_3012"/>
<dbReference type="eggNOG" id="COG1920">
    <property type="taxonomic scope" value="Bacteria"/>
</dbReference>
<dbReference type="HOGENOM" id="CLU_076569_0_0_11"/>
<dbReference type="UniPathway" id="UPA00071"/>
<dbReference type="Proteomes" id="UP000001988">
    <property type="component" value="Chromosome"/>
</dbReference>
<dbReference type="GO" id="GO:0005525">
    <property type="term" value="F:GTP binding"/>
    <property type="evidence" value="ECO:0007669"/>
    <property type="project" value="UniProtKB-KW"/>
</dbReference>
<dbReference type="GO" id="GO:0043814">
    <property type="term" value="F:phospholactate guanylyltransferase activity"/>
    <property type="evidence" value="ECO:0007669"/>
    <property type="project" value="InterPro"/>
</dbReference>
<dbReference type="GO" id="GO:0052645">
    <property type="term" value="P:F420-0 metabolic process"/>
    <property type="evidence" value="ECO:0007669"/>
    <property type="project" value="UniProtKB-UniRule"/>
</dbReference>
<dbReference type="FunFam" id="3.90.550.10:FF:000190">
    <property type="entry name" value="2-phospho-L-lactate guanylyltransferase"/>
    <property type="match status" value="1"/>
</dbReference>
<dbReference type="Gene3D" id="3.90.550.10">
    <property type="entry name" value="Spore Coat Polysaccharide Biosynthesis Protein SpsA, Chain A"/>
    <property type="match status" value="1"/>
</dbReference>
<dbReference type="HAMAP" id="MF_02114">
    <property type="entry name" value="CofC"/>
    <property type="match status" value="1"/>
</dbReference>
<dbReference type="InterPro" id="IPR002835">
    <property type="entry name" value="CofC"/>
</dbReference>
<dbReference type="InterPro" id="IPR029044">
    <property type="entry name" value="Nucleotide-diphossugar_trans"/>
</dbReference>
<dbReference type="NCBIfam" id="TIGR03552">
    <property type="entry name" value="F420_cofC"/>
    <property type="match status" value="1"/>
</dbReference>
<dbReference type="PANTHER" id="PTHR40392">
    <property type="entry name" value="2-PHOSPHO-L-LACTATE GUANYLYLTRANSFERASE"/>
    <property type="match status" value="1"/>
</dbReference>
<dbReference type="PANTHER" id="PTHR40392:SF1">
    <property type="entry name" value="2-PHOSPHO-L-LACTATE GUANYLYLTRANSFERASE"/>
    <property type="match status" value="1"/>
</dbReference>
<dbReference type="Pfam" id="PF01983">
    <property type="entry name" value="CofC"/>
    <property type="match status" value="1"/>
</dbReference>
<dbReference type="SUPFAM" id="SSF53448">
    <property type="entry name" value="Nucleotide-diphospho-sugar transferases"/>
    <property type="match status" value="1"/>
</dbReference>
<organism>
    <name type="scientific">Mycobacterium tuberculosis (strain ATCC 25177 / H37Ra)</name>
    <dbReference type="NCBI Taxonomy" id="419947"/>
    <lineage>
        <taxon>Bacteria</taxon>
        <taxon>Bacillati</taxon>
        <taxon>Actinomycetota</taxon>
        <taxon>Actinomycetes</taxon>
        <taxon>Mycobacteriales</taxon>
        <taxon>Mycobacteriaceae</taxon>
        <taxon>Mycobacterium</taxon>
        <taxon>Mycobacterium tuberculosis complex</taxon>
    </lineage>
</organism>
<protein>
    <recommendedName>
        <fullName evidence="1">Phosphoenolpyruvate guanylyltransferase</fullName>
        <shortName evidence="1">PEP guanylyltransferase</shortName>
        <ecNumber evidence="1">2.7.7.105</ecNumber>
    </recommendedName>
</protein>
<name>FBID_MYCTA</name>
<keyword id="KW-0342">GTP-binding</keyword>
<keyword id="KW-0547">Nucleotide-binding</keyword>
<keyword id="KW-0548">Nucleotidyltransferase</keyword>
<keyword id="KW-1185">Reference proteome</keyword>
<keyword id="KW-0808">Transferase</keyword>
<proteinExistence type="inferred from homology"/>
<sequence>MSGTPDDGDIGLIIAVKRLAAAKTRLAPVFSAQTRENVVLAMLVDTLTAAAGVGSLRSITVITPDEAAAAAAAGLGADVLADPTPEDDPDPLNTAITAAERVVAEGASNIVVLQGDLPALQTQELAEAISAARHHRRSFVADRLGTGTAVLCAFGTALHPRFGPDSSARHRRSGAVELTGAWPGLRCDVDTPADLTAARQLGVGPATARAVAHR</sequence>
<gene>
    <name evidence="1" type="primary">fbiD</name>
    <name type="ordered locus">MRA_3012</name>
</gene>
<accession>A5U6Z4</accession>
<evidence type="ECO:0000255" key="1">
    <source>
        <dbReference type="HAMAP-Rule" id="MF_02114"/>
    </source>
</evidence>
<comment type="function">
    <text evidence="1">Guanylyltransferase that catalyzes the activation of phosphoenolpyruvate (PEP) as enolpyruvoyl-2-diphospho-5'-guanosine, via the condensation of PEP with GTP. It is involved in the biosynthesis of coenzyme F420, a hydride carrier cofactor.</text>
</comment>
<comment type="catalytic activity">
    <reaction evidence="1">
        <text>phosphoenolpyruvate + GTP + H(+) = enolpyruvoyl-2-diphospho-5'-guanosine + diphosphate</text>
        <dbReference type="Rhea" id="RHEA:30519"/>
        <dbReference type="ChEBI" id="CHEBI:15378"/>
        <dbReference type="ChEBI" id="CHEBI:33019"/>
        <dbReference type="ChEBI" id="CHEBI:37565"/>
        <dbReference type="ChEBI" id="CHEBI:58702"/>
        <dbReference type="ChEBI" id="CHEBI:143701"/>
        <dbReference type="EC" id="2.7.7.105"/>
    </reaction>
</comment>
<comment type="pathway">
    <text evidence="1">Cofactor biosynthesis; coenzyme F420 biosynthesis.</text>
</comment>
<comment type="similarity">
    <text evidence="1">Belongs to the CofC family.</text>
</comment>
<reference key="1">
    <citation type="journal article" date="2008" name="PLoS ONE">
        <title>Genetic basis of virulence attenuation revealed by comparative genomic analysis of Mycobacterium tuberculosis strain H37Ra versus H37Rv.</title>
        <authorList>
            <person name="Zheng H."/>
            <person name="Lu L."/>
            <person name="Wang B."/>
            <person name="Pu S."/>
            <person name="Zhang X."/>
            <person name="Zhu G."/>
            <person name="Shi W."/>
            <person name="Zhang L."/>
            <person name="Wang H."/>
            <person name="Wang S."/>
            <person name="Zhao G."/>
            <person name="Zhang Y."/>
        </authorList>
    </citation>
    <scope>NUCLEOTIDE SEQUENCE [LARGE SCALE GENOMIC DNA]</scope>
    <source>
        <strain>ATCC 25177 / H37Ra</strain>
    </source>
</reference>
<feature type="chain" id="PRO_0000398697" description="Phosphoenolpyruvate guanylyltransferase">
    <location>
        <begin position="1"/>
        <end position="214"/>
    </location>
</feature>
<feature type="binding site" evidence="1">
    <location>
        <position position="148"/>
    </location>
    <ligand>
        <name>phosphoenolpyruvate</name>
        <dbReference type="ChEBI" id="CHEBI:58702"/>
    </ligand>
</feature>
<feature type="binding site" evidence="1">
    <location>
        <position position="163"/>
    </location>
    <ligand>
        <name>phosphoenolpyruvate</name>
        <dbReference type="ChEBI" id="CHEBI:58702"/>
    </ligand>
</feature>
<feature type="binding site" evidence="1">
    <location>
        <position position="166"/>
    </location>
    <ligand>
        <name>phosphoenolpyruvate</name>
        <dbReference type="ChEBI" id="CHEBI:58702"/>
    </ligand>
</feature>